<dbReference type="EMBL" id="L04802">
    <property type="status" value="NOT_ANNOTATED_CDS"/>
    <property type="molecule type" value="Genomic_DNA"/>
</dbReference>
<dbReference type="EMBL" id="L33180">
    <property type="protein sequence ID" value="AAC63802.1"/>
    <property type="molecule type" value="Genomic_DNA"/>
</dbReference>
<dbReference type="PIR" id="A45720">
    <property type="entry name" value="A45720"/>
</dbReference>
<dbReference type="RefSeq" id="NP_047533.1">
    <property type="nucleotide sequence ID" value="NC_001962.1"/>
</dbReference>
<dbReference type="SMR" id="P31354"/>
<dbReference type="GeneID" id="1488744"/>
<dbReference type="KEGG" id="vg:1488744"/>
<dbReference type="OrthoDB" id="7149at10239"/>
<dbReference type="Proteomes" id="UP000204315">
    <property type="component" value="Genome"/>
</dbReference>
<dbReference type="GO" id="GO:0004869">
    <property type="term" value="F:cysteine-type endopeptidase inhibitor activity"/>
    <property type="evidence" value="ECO:0007669"/>
    <property type="project" value="UniProtKB-KW"/>
</dbReference>
<dbReference type="GO" id="GO:0043027">
    <property type="term" value="F:cysteine-type endopeptidase inhibitor activity involved in apoptotic process"/>
    <property type="evidence" value="ECO:0007669"/>
    <property type="project" value="InterPro"/>
</dbReference>
<dbReference type="GO" id="GO:0043066">
    <property type="term" value="P:negative regulation of apoptotic process"/>
    <property type="evidence" value="ECO:0007669"/>
    <property type="project" value="InterPro"/>
</dbReference>
<dbReference type="GO" id="GO:0033668">
    <property type="term" value="P:symbiont-mediated suppression of host apoptosis"/>
    <property type="evidence" value="ECO:0007669"/>
    <property type="project" value="UniProtKB-KW"/>
</dbReference>
<dbReference type="Gene3D" id="2.60.250.10">
    <property type="entry name" value="Baculovirus p35"/>
    <property type="match status" value="1"/>
</dbReference>
<dbReference type="InterPro" id="IPR003429">
    <property type="entry name" value="Baculovirus_p35"/>
</dbReference>
<dbReference type="InterPro" id="IPR036562">
    <property type="entry name" value="Baculovirus_p35_sf"/>
</dbReference>
<dbReference type="Pfam" id="PF02331">
    <property type="entry name" value="P35"/>
    <property type="match status" value="1"/>
</dbReference>
<dbReference type="SUPFAM" id="SSF49894">
    <property type="entry name" value="Baculovirus p35 protein"/>
    <property type="match status" value="1"/>
</dbReference>
<comment type="function">
    <text>Blocks the insect or worm host cells apoptotic response initiated by the viral infection. Confers protection from cell death in mammalian cells. Acts by blocking the activity of members of the caspase family of proteases.</text>
</comment>
<comment type="similarity">
    <text evidence="1">Belongs to the protease inhibitor I50 (p35) family.</text>
</comment>
<gene>
    <name type="primary">P35</name>
</gene>
<organismHost>
    <name type="scientific">Bombyx mori</name>
    <name type="common">Silk moth</name>
    <dbReference type="NCBI Taxonomy" id="7091"/>
</organismHost>
<name>VP35_NPVBM</name>
<reference key="1">
    <citation type="journal article" date="1993" name="J. Virol.">
        <title>Identification and characterization of the p35 gene of Bombyx mori nuclear polyhedrosis virus that prevents virus-induced apoptosis.</title>
        <authorList>
            <person name="Kamita S.G."/>
            <person name="Majima K."/>
            <person name="Maeda S."/>
        </authorList>
    </citation>
    <scope>NUCLEOTIDE SEQUENCE [GENOMIC DNA]</scope>
    <source>
        <strain>T3</strain>
    </source>
</reference>
<reference key="2">
    <citation type="journal article" date="1999" name="J. Gen. Virol.">
        <title>Sequence analysis of the genome of Bombyx mori nucleopolyhedrovirus.</title>
        <authorList>
            <person name="Gomi S."/>
            <person name="Majima K."/>
            <person name="Maeda S."/>
        </authorList>
    </citation>
    <scope>NUCLEOTIDE SEQUENCE [LARGE SCALE GENOMIC DNA]</scope>
    <source>
        <strain>T3</strain>
    </source>
</reference>
<sequence>MCVIFPVEIDVSQTVIRDCHVDEQTRELVYINKIMNTQLTKPVLMMFNISGPIRSVTRKNNDLRDRIKSKVDEQFDQLEREYSDKIDGFHDNIQYFKDEHYSVSCQNGSVLKSKFAKILKSHDYTDKKSIETYEKYCLPQLVDKHNDCYVAVCVLKPGFENGSNQVLSFEYNPIGNKVIVPFAHEINDTGLYEYDVLAYVDSVEFDGKQFEEFVQKLILPSSFNDSEKVLYYNEASKNKNMIYKALEFTTESSWVKSNKFNWKIFCNGFIYDKKSKALYVKLHNVTSTLNKNVILDMIK</sequence>
<feature type="chain" id="PRO_0000132899" description="Early 35 kDa protein">
    <location>
        <begin position="1"/>
        <end position="299"/>
    </location>
</feature>
<organism>
    <name type="scientific">Bombyx mori nuclear polyhedrosis virus</name>
    <name type="common">BmNPV</name>
    <dbReference type="NCBI Taxonomy" id="271108"/>
    <lineage>
        <taxon>Viruses</taxon>
        <taxon>Viruses incertae sedis</taxon>
        <taxon>Naldaviricetes</taxon>
        <taxon>Lefavirales</taxon>
        <taxon>Baculoviridae</taxon>
        <taxon>Alphabaculovirus</taxon>
        <taxon>Alphabaculovirus bomori</taxon>
    </lineage>
</organism>
<keyword id="KW-0053">Apoptosis</keyword>
<keyword id="KW-0244">Early protein</keyword>
<keyword id="KW-0945">Host-virus interaction</keyword>
<keyword id="KW-1085">Inhibition of host caspases by virus</keyword>
<keyword id="KW-1119">Modulation of host cell apoptosis by virus</keyword>
<keyword id="KW-0646">Protease inhibitor</keyword>
<keyword id="KW-0789">Thiol protease inhibitor</keyword>
<protein>
    <recommendedName>
        <fullName>Early 35 kDa protein</fullName>
    </recommendedName>
    <alternativeName>
        <fullName>Apoptosis-preventing protein</fullName>
    </alternativeName>
    <alternativeName>
        <fullName>p35</fullName>
    </alternativeName>
</protein>
<proteinExistence type="inferred from homology"/>
<evidence type="ECO:0000305" key="1"/>
<accession>P31354</accession>